<proteinExistence type="inferred from homology"/>
<protein>
    <recommendedName>
        <fullName evidence="1">S-ribosylhomocysteine lyase</fullName>
        <ecNumber evidence="1">4.4.1.21</ecNumber>
    </recommendedName>
    <alternativeName>
        <fullName evidence="1">AI-2 synthesis protein</fullName>
    </alternativeName>
    <alternativeName>
        <fullName evidence="1">Autoinducer-2 production protein LuxS</fullName>
    </alternativeName>
</protein>
<name>LUXS_STRT1</name>
<sequence length="160" mass="17965">MPKDVTVESFELDHTIVKAPYVRLISEEVGPKGDIITNFDIRLIQPNENSIDTGGLHTIEHLLAKLIRQRIDGLIDCSPFGCRTGFHMIMWGKQDPTEIAKVIKSSLEAIANEITWEDVPGTTIESCGNYKDHSLHSAKEWAKLILEQGISDQAFERHTV</sequence>
<keyword id="KW-0071">Autoinducer synthesis</keyword>
<keyword id="KW-0408">Iron</keyword>
<keyword id="KW-0456">Lyase</keyword>
<keyword id="KW-0479">Metal-binding</keyword>
<keyword id="KW-0673">Quorum sensing</keyword>
<organism>
    <name type="scientific">Streptococcus thermophilus (strain CNRZ 1066)</name>
    <dbReference type="NCBI Taxonomy" id="299768"/>
    <lineage>
        <taxon>Bacteria</taxon>
        <taxon>Bacillati</taxon>
        <taxon>Bacillota</taxon>
        <taxon>Bacilli</taxon>
        <taxon>Lactobacillales</taxon>
        <taxon>Streptococcaceae</taxon>
        <taxon>Streptococcus</taxon>
    </lineage>
</organism>
<dbReference type="EC" id="4.4.1.21" evidence="1"/>
<dbReference type="EMBL" id="CP000024">
    <property type="protein sequence ID" value="AAV61996.1"/>
    <property type="molecule type" value="Genomic_DNA"/>
</dbReference>
<dbReference type="RefSeq" id="WP_002885585.1">
    <property type="nucleotide sequence ID" value="NC_006449.1"/>
</dbReference>
<dbReference type="SMR" id="Q5M173"/>
<dbReference type="KEGG" id="stc:str0394"/>
<dbReference type="HOGENOM" id="CLU_107531_2_1_9"/>
<dbReference type="GO" id="GO:0005506">
    <property type="term" value="F:iron ion binding"/>
    <property type="evidence" value="ECO:0007669"/>
    <property type="project" value="InterPro"/>
</dbReference>
<dbReference type="GO" id="GO:0043768">
    <property type="term" value="F:S-ribosylhomocysteine lyase activity"/>
    <property type="evidence" value="ECO:0007669"/>
    <property type="project" value="UniProtKB-UniRule"/>
</dbReference>
<dbReference type="GO" id="GO:0009372">
    <property type="term" value="P:quorum sensing"/>
    <property type="evidence" value="ECO:0007669"/>
    <property type="project" value="UniProtKB-UniRule"/>
</dbReference>
<dbReference type="Gene3D" id="3.30.1360.80">
    <property type="entry name" value="S-ribosylhomocysteinase (LuxS)"/>
    <property type="match status" value="1"/>
</dbReference>
<dbReference type="HAMAP" id="MF_00091">
    <property type="entry name" value="LuxS"/>
    <property type="match status" value="1"/>
</dbReference>
<dbReference type="InterPro" id="IPR037005">
    <property type="entry name" value="LuxS_sf"/>
</dbReference>
<dbReference type="InterPro" id="IPR011249">
    <property type="entry name" value="Metalloenz_LuxS/M16"/>
</dbReference>
<dbReference type="InterPro" id="IPR003815">
    <property type="entry name" value="S-ribosylhomocysteinase"/>
</dbReference>
<dbReference type="NCBIfam" id="NF002607">
    <property type="entry name" value="PRK02260.2-5"/>
    <property type="match status" value="1"/>
</dbReference>
<dbReference type="NCBIfam" id="NF002608">
    <property type="entry name" value="PRK02260.3-1"/>
    <property type="match status" value="1"/>
</dbReference>
<dbReference type="PANTHER" id="PTHR35799">
    <property type="entry name" value="S-RIBOSYLHOMOCYSTEINE LYASE"/>
    <property type="match status" value="1"/>
</dbReference>
<dbReference type="PANTHER" id="PTHR35799:SF1">
    <property type="entry name" value="S-RIBOSYLHOMOCYSTEINE LYASE"/>
    <property type="match status" value="1"/>
</dbReference>
<dbReference type="Pfam" id="PF02664">
    <property type="entry name" value="LuxS"/>
    <property type="match status" value="1"/>
</dbReference>
<dbReference type="PIRSF" id="PIRSF006160">
    <property type="entry name" value="AI2"/>
    <property type="match status" value="1"/>
</dbReference>
<dbReference type="PRINTS" id="PR01487">
    <property type="entry name" value="LUXSPROTEIN"/>
</dbReference>
<dbReference type="SUPFAM" id="SSF63411">
    <property type="entry name" value="LuxS/MPP-like metallohydrolase"/>
    <property type="match status" value="1"/>
</dbReference>
<reference key="1">
    <citation type="journal article" date="2004" name="Nat. Biotechnol.">
        <title>Complete sequence and comparative genome analysis of the dairy bacterium Streptococcus thermophilus.</title>
        <authorList>
            <person name="Bolotin A."/>
            <person name="Quinquis B."/>
            <person name="Renault P."/>
            <person name="Sorokin A."/>
            <person name="Ehrlich S.D."/>
            <person name="Kulakauskas S."/>
            <person name="Lapidus A."/>
            <person name="Goltsman E."/>
            <person name="Mazur M."/>
            <person name="Pusch G.D."/>
            <person name="Fonstein M."/>
            <person name="Overbeek R."/>
            <person name="Kyprides N."/>
            <person name="Purnelle B."/>
            <person name="Prozzi D."/>
            <person name="Ngui K."/>
            <person name="Masuy D."/>
            <person name="Hancy F."/>
            <person name="Burteau S."/>
            <person name="Boutry M."/>
            <person name="Delcour J."/>
            <person name="Goffeau A."/>
            <person name="Hols P."/>
        </authorList>
    </citation>
    <scope>NUCLEOTIDE SEQUENCE [LARGE SCALE GENOMIC DNA]</scope>
    <source>
        <strain>CNRZ 1066</strain>
    </source>
</reference>
<gene>
    <name evidence="1" type="primary">luxS</name>
    <name type="ordered locus">str0394</name>
</gene>
<feature type="chain" id="PRO_0000298053" description="S-ribosylhomocysteine lyase">
    <location>
        <begin position="1"/>
        <end position="160"/>
    </location>
</feature>
<feature type="binding site" evidence="1">
    <location>
        <position position="57"/>
    </location>
    <ligand>
        <name>Fe cation</name>
        <dbReference type="ChEBI" id="CHEBI:24875"/>
    </ligand>
</feature>
<feature type="binding site" evidence="1">
    <location>
        <position position="61"/>
    </location>
    <ligand>
        <name>Fe cation</name>
        <dbReference type="ChEBI" id="CHEBI:24875"/>
    </ligand>
</feature>
<feature type="binding site" evidence="1">
    <location>
        <position position="127"/>
    </location>
    <ligand>
        <name>Fe cation</name>
        <dbReference type="ChEBI" id="CHEBI:24875"/>
    </ligand>
</feature>
<accession>Q5M173</accession>
<evidence type="ECO:0000255" key="1">
    <source>
        <dbReference type="HAMAP-Rule" id="MF_00091"/>
    </source>
</evidence>
<comment type="function">
    <text evidence="1">Involved in the synthesis of autoinducer 2 (AI-2) which is secreted by bacteria and is used to communicate both the cell density and the metabolic potential of the environment. The regulation of gene expression in response to changes in cell density is called quorum sensing. Catalyzes the transformation of S-ribosylhomocysteine (RHC) to homocysteine (HC) and 4,5-dihydroxy-2,3-pentadione (DPD).</text>
</comment>
<comment type="catalytic activity">
    <reaction evidence="1">
        <text>S-(5-deoxy-D-ribos-5-yl)-L-homocysteine = (S)-4,5-dihydroxypentane-2,3-dione + L-homocysteine</text>
        <dbReference type="Rhea" id="RHEA:17753"/>
        <dbReference type="ChEBI" id="CHEBI:29484"/>
        <dbReference type="ChEBI" id="CHEBI:58195"/>
        <dbReference type="ChEBI" id="CHEBI:58199"/>
        <dbReference type="EC" id="4.4.1.21"/>
    </reaction>
</comment>
<comment type="cofactor">
    <cofactor evidence="1">
        <name>Fe cation</name>
        <dbReference type="ChEBI" id="CHEBI:24875"/>
    </cofactor>
    <text evidence="1">Binds 1 Fe cation per subunit.</text>
</comment>
<comment type="subunit">
    <text evidence="1">Homodimer.</text>
</comment>
<comment type="similarity">
    <text evidence="1">Belongs to the LuxS family.</text>
</comment>